<organism>
    <name type="scientific">Saccharomyces cerevisiae (strain ATCC 204508 / S288c)</name>
    <name type="common">Baker's yeast</name>
    <dbReference type="NCBI Taxonomy" id="559292"/>
    <lineage>
        <taxon>Eukaryota</taxon>
        <taxon>Fungi</taxon>
        <taxon>Dikarya</taxon>
        <taxon>Ascomycota</taxon>
        <taxon>Saccharomycotina</taxon>
        <taxon>Saccharomycetes</taxon>
        <taxon>Saccharomycetales</taxon>
        <taxon>Saccharomycetaceae</taxon>
        <taxon>Saccharomyces</taxon>
    </lineage>
</organism>
<reference key="1">
    <citation type="journal article" date="1994" name="J. Cell Biol.">
        <title>Role of three rab5-like GTPases, Ypt51p, Ypt52p, and Ypt53p, in the endocytic and vacuolar protein sorting pathways of yeast.</title>
        <authorList>
            <person name="Singer-Krueger B."/>
            <person name="Stenmark H."/>
            <person name="Duesterhoeft A."/>
            <person name="Philippsen P."/>
            <person name="Yoo J.-S."/>
            <person name="Gallwitz D."/>
            <person name="Zerial M."/>
        </authorList>
    </citation>
    <scope>NUCLEOTIDE SEQUENCE [GENOMIC DNA]</scope>
</reference>
<reference key="2">
    <citation type="journal article" date="2002" name="Nature">
        <title>Dissecting the architecture of a quantitative trait locus in yeast.</title>
        <authorList>
            <person name="Steinmetz L.M."/>
            <person name="Sinha H."/>
            <person name="Richards D.R."/>
            <person name="Spiegelman J.I."/>
            <person name="Oefner P.J."/>
            <person name="McCusker J.H."/>
            <person name="Davis R.W."/>
        </authorList>
    </citation>
    <scope>NUCLEOTIDE SEQUENCE [GENOMIC DNA]</scope>
    <source>
        <strain>ATCC 200060 / W303</strain>
        <strain>S96</strain>
        <strain>SK1</strain>
        <strain>YJM 1129</strain>
        <strain>YJM 269</strain>
        <strain>YJM 270</strain>
        <strain>YJM 280</strain>
        <strain>YJM 320</strain>
        <strain>YJM 326</strain>
        <strain>YJM 627</strain>
        <strain>YJM 789</strain>
    </source>
</reference>
<reference key="3">
    <citation type="journal article" date="2005" name="Nat. Genet.">
        <title>Quantitative trait loci mapped to single-nucleotide resolution in yeast.</title>
        <authorList>
            <person name="Deutschbauer A.M."/>
            <person name="Davis R.W."/>
        </authorList>
    </citation>
    <scope>NUCLEOTIDE SEQUENCE [GENOMIC DNA]</scope>
    <source>
        <strain>SK1</strain>
    </source>
</reference>
<reference key="4">
    <citation type="journal article" date="1996" name="Yeast">
        <title>Sequence analysis of a 14.2 kb fragment of Saccharomyces cerevisiae chromosome XIV that includes the ypt53, tRNALeu and gsr m2 genes and four new open reading frames.</title>
        <authorList>
            <person name="Garcia-Cantalejo J.M."/>
            <person name="Boskovic J."/>
            <person name="Jimenez A."/>
        </authorList>
    </citation>
    <scope>NUCLEOTIDE SEQUENCE [GENOMIC DNA]</scope>
    <source>
        <strain>ATCC 96604 / S288c / FY1679</strain>
    </source>
</reference>
<reference key="5">
    <citation type="journal article" date="1997" name="Nature">
        <title>The nucleotide sequence of Saccharomyces cerevisiae chromosome XIV and its evolutionary implications.</title>
        <authorList>
            <person name="Philippsen P."/>
            <person name="Kleine K."/>
            <person name="Poehlmann R."/>
            <person name="Duesterhoeft A."/>
            <person name="Hamberg K."/>
            <person name="Hegemann J.H."/>
            <person name="Obermaier B."/>
            <person name="Urrestarazu L.A."/>
            <person name="Aert R."/>
            <person name="Albermann K."/>
            <person name="Altmann R."/>
            <person name="Andre B."/>
            <person name="Baladron V."/>
            <person name="Ballesta J.P.G."/>
            <person name="Becam A.-M."/>
            <person name="Beinhauer J.D."/>
            <person name="Boskovic J."/>
            <person name="Buitrago M.J."/>
            <person name="Bussereau F."/>
            <person name="Coster F."/>
            <person name="Crouzet M."/>
            <person name="D'Angelo M."/>
            <person name="Dal Pero F."/>
            <person name="De Antoni A."/>
            <person name="del Rey F."/>
            <person name="Doignon F."/>
            <person name="Domdey H."/>
            <person name="Dubois E."/>
            <person name="Fiedler T.A."/>
            <person name="Fleig U."/>
            <person name="Floeth M."/>
            <person name="Fritz C."/>
            <person name="Gaillardin C."/>
            <person name="Garcia-Cantalejo J.M."/>
            <person name="Glansdorff N."/>
            <person name="Goffeau A."/>
            <person name="Gueldener U."/>
            <person name="Herbert C.J."/>
            <person name="Heumann K."/>
            <person name="Heuss-Neitzel D."/>
            <person name="Hilbert H."/>
            <person name="Hinni K."/>
            <person name="Iraqui Houssaini I."/>
            <person name="Jacquet M."/>
            <person name="Jimenez A."/>
            <person name="Jonniaux J.-L."/>
            <person name="Karpfinger-Hartl L."/>
            <person name="Lanfranchi G."/>
            <person name="Lepingle A."/>
            <person name="Levesque H."/>
            <person name="Lyck R."/>
            <person name="Maftahi M."/>
            <person name="Mallet L."/>
            <person name="Maurer C.T.C."/>
            <person name="Messenguy F."/>
            <person name="Mewes H.-W."/>
            <person name="Moestl D."/>
            <person name="Nasr F."/>
            <person name="Nicaud J.-M."/>
            <person name="Niedenthal R.K."/>
            <person name="Pandolfo D."/>
            <person name="Pierard A."/>
            <person name="Piravandi E."/>
            <person name="Planta R.J."/>
            <person name="Pohl T.M."/>
            <person name="Purnelle B."/>
            <person name="Rebischung C."/>
            <person name="Remacha M.A."/>
            <person name="Revuelta J.L."/>
            <person name="Rinke M."/>
            <person name="Saiz J.E."/>
            <person name="Sartorello F."/>
            <person name="Scherens B."/>
            <person name="Sen-Gupta M."/>
            <person name="Soler-Mira A."/>
            <person name="Urbanus J.H.M."/>
            <person name="Valle G."/>
            <person name="Van Dyck L."/>
            <person name="Verhasselt P."/>
            <person name="Vierendeels F."/>
            <person name="Vissers S."/>
            <person name="Voet M."/>
            <person name="Volckaert G."/>
            <person name="Wach A."/>
            <person name="Wambutt R."/>
            <person name="Wedler H."/>
            <person name="Zollner A."/>
            <person name="Hani J."/>
        </authorList>
    </citation>
    <scope>NUCLEOTIDE SEQUENCE [LARGE SCALE GENOMIC DNA]</scope>
    <source>
        <strain>ATCC 204508 / S288c</strain>
    </source>
</reference>
<reference key="6">
    <citation type="journal article" date="2014" name="G3 (Bethesda)">
        <title>The reference genome sequence of Saccharomyces cerevisiae: Then and now.</title>
        <authorList>
            <person name="Engel S.R."/>
            <person name="Dietrich F.S."/>
            <person name="Fisk D.G."/>
            <person name="Binkley G."/>
            <person name="Balakrishnan R."/>
            <person name="Costanzo M.C."/>
            <person name="Dwight S.S."/>
            <person name="Hitz B.C."/>
            <person name="Karra K."/>
            <person name="Nash R.S."/>
            <person name="Weng S."/>
            <person name="Wong E.D."/>
            <person name="Lloyd P."/>
            <person name="Skrzypek M.S."/>
            <person name="Miyasato S.R."/>
            <person name="Simison M."/>
            <person name="Cherry J.M."/>
        </authorList>
    </citation>
    <scope>GENOME REANNOTATION</scope>
    <source>
        <strain>ATCC 204508 / S288c</strain>
    </source>
</reference>
<reference key="7">
    <citation type="journal article" date="2007" name="Genome Res.">
        <title>Approaching a complete repository of sequence-verified protein-encoding clones for Saccharomyces cerevisiae.</title>
        <authorList>
            <person name="Hu Y."/>
            <person name="Rolfs A."/>
            <person name="Bhullar B."/>
            <person name="Murthy T.V.S."/>
            <person name="Zhu C."/>
            <person name="Berger M.F."/>
            <person name="Camargo A.A."/>
            <person name="Kelley F."/>
            <person name="McCarron S."/>
            <person name="Jepson D."/>
            <person name="Richardson A."/>
            <person name="Raphael J."/>
            <person name="Moreira D."/>
            <person name="Taycher E."/>
            <person name="Zuo D."/>
            <person name="Mohr S."/>
            <person name="Kane M.F."/>
            <person name="Williamson J."/>
            <person name="Simpson A.J.G."/>
            <person name="Bulyk M.L."/>
            <person name="Harlow E."/>
            <person name="Marsischky G."/>
            <person name="Kolodner R.D."/>
            <person name="LaBaer J."/>
        </authorList>
    </citation>
    <scope>NUCLEOTIDE SEQUENCE [GENOMIC DNA]</scope>
    <source>
        <strain>ATCC 204508 / S288c</strain>
    </source>
</reference>
<reference key="8">
    <citation type="journal article" date="2003" name="Nature">
        <title>Global analysis of protein expression in yeast.</title>
        <authorList>
            <person name="Ghaemmaghami S."/>
            <person name="Huh W.-K."/>
            <person name="Bower K."/>
            <person name="Howson R.W."/>
            <person name="Belle A."/>
            <person name="Dephoure N."/>
            <person name="O'Shea E.K."/>
            <person name="Weissman J.S."/>
        </authorList>
    </citation>
    <scope>LEVEL OF PROTEIN EXPRESSION [LARGE SCALE ANALYSIS]</scope>
</reference>
<reference key="9">
    <citation type="journal article" date="2020" name="Elife">
        <title>A conserved and regulated mechanism drives endosomal Rab transition.</title>
        <authorList>
            <person name="Langemeyer L."/>
            <person name="Borchers A.C."/>
            <person name="Herrmann E."/>
            <person name="Fuellbrunn N."/>
            <person name="Han Y."/>
            <person name="Perz A."/>
            <person name="Auffarth K."/>
            <person name="Kuemmel D."/>
            <person name="Ungermann C."/>
        </authorList>
    </citation>
    <scope>FUNCTION</scope>
</reference>
<feature type="chain" id="PRO_0000121327" description="GTP-binding protein YPT53">
    <location>
        <begin position="1"/>
        <end position="220"/>
    </location>
</feature>
<feature type="binding site" evidence="1">
    <location>
        <begin position="19"/>
        <end position="26"/>
    </location>
    <ligand>
        <name>GTP</name>
        <dbReference type="ChEBI" id="CHEBI:37565"/>
    </ligand>
</feature>
<feature type="binding site" evidence="1">
    <location>
        <begin position="67"/>
        <end position="71"/>
    </location>
    <ligand>
        <name>GTP</name>
        <dbReference type="ChEBI" id="CHEBI:37565"/>
    </ligand>
</feature>
<feature type="binding site" evidence="1">
    <location>
        <begin position="125"/>
        <end position="128"/>
    </location>
    <ligand>
        <name>GTP</name>
        <dbReference type="ChEBI" id="CHEBI:37565"/>
    </ligand>
</feature>
<feature type="modified residue" description="Cysteine methyl ester" evidence="1">
    <location>
        <position position="220"/>
    </location>
</feature>
<feature type="lipid moiety-binding region" description="S-geranylgeranyl cysteine" evidence="1">
    <location>
        <position position="218"/>
    </location>
</feature>
<feature type="lipid moiety-binding region" description="S-geranylgeranyl cysteine" evidence="1">
    <location>
        <position position="220"/>
    </location>
</feature>
<proteinExistence type="evidence at protein level"/>
<evidence type="ECO:0000250" key="1"/>
<evidence type="ECO:0000269" key="2">
    <source>
    </source>
</evidence>
<evidence type="ECO:0000269" key="3">
    <source>
    </source>
</evidence>
<evidence type="ECO:0000305" key="4"/>
<keyword id="KW-1003">Cell membrane</keyword>
<keyword id="KW-0342">GTP-binding</keyword>
<keyword id="KW-0449">Lipoprotein</keyword>
<keyword id="KW-0472">Membrane</keyword>
<keyword id="KW-0488">Methylation</keyword>
<keyword id="KW-0547">Nucleotide-binding</keyword>
<keyword id="KW-0636">Prenylation</keyword>
<keyword id="KW-0653">Protein transport</keyword>
<keyword id="KW-1185">Reference proteome</keyword>
<keyword id="KW-0813">Transport</keyword>
<accession>P36019</accession>
<accession>D6W187</accession>
<accession>Q45TZ5</accession>
<dbReference type="EMBL" id="X76175">
    <property type="protein sequence ID" value="CAA53771.1"/>
    <property type="molecule type" value="Genomic_DNA"/>
</dbReference>
<dbReference type="EMBL" id="AF458969">
    <property type="protein sequence ID" value="AAM00516.1"/>
    <property type="molecule type" value="Genomic_DNA"/>
</dbReference>
<dbReference type="EMBL" id="AF458970">
    <property type="protein sequence ID" value="AAM00522.1"/>
    <property type="molecule type" value="Genomic_DNA"/>
</dbReference>
<dbReference type="EMBL" id="AF458971">
    <property type="protein sequence ID" value="AAM00528.1"/>
    <property type="molecule type" value="Genomic_DNA"/>
</dbReference>
<dbReference type="EMBL" id="AF458972">
    <property type="protein sequence ID" value="AAM00534.1"/>
    <property type="molecule type" value="Genomic_DNA"/>
</dbReference>
<dbReference type="EMBL" id="AF458975">
    <property type="protein sequence ID" value="AAM00552.1"/>
    <property type="molecule type" value="Genomic_DNA"/>
</dbReference>
<dbReference type="EMBL" id="AF458976">
    <property type="protein sequence ID" value="AAM00558.1"/>
    <property type="molecule type" value="Genomic_DNA"/>
</dbReference>
<dbReference type="EMBL" id="AF458977">
    <property type="protein sequence ID" value="AAM00564.1"/>
    <property type="molecule type" value="Genomic_DNA"/>
</dbReference>
<dbReference type="EMBL" id="AF458978">
    <property type="protein sequence ID" value="AAM00570.1"/>
    <property type="molecule type" value="Genomic_DNA"/>
</dbReference>
<dbReference type="EMBL" id="AF458979">
    <property type="protein sequence ID" value="AAM00576.1"/>
    <property type="molecule type" value="Genomic_DNA"/>
</dbReference>
<dbReference type="EMBL" id="AF458980">
    <property type="protein sequence ID" value="AAM00582.1"/>
    <property type="molecule type" value="Genomic_DNA"/>
</dbReference>
<dbReference type="EMBL" id="AF458981">
    <property type="protein sequence ID" value="AAM00588.1"/>
    <property type="molecule type" value="Genomic_DNA"/>
</dbReference>
<dbReference type="EMBL" id="DQ115393">
    <property type="protein sequence ID" value="AAZ22515.1"/>
    <property type="molecule type" value="Genomic_DNA"/>
</dbReference>
<dbReference type="EMBL" id="X85811">
    <property type="protein sequence ID" value="CAA59824.1"/>
    <property type="molecule type" value="Genomic_DNA"/>
</dbReference>
<dbReference type="EMBL" id="Z71369">
    <property type="protein sequence ID" value="CAA95969.1"/>
    <property type="molecule type" value="Genomic_DNA"/>
</dbReference>
<dbReference type="EMBL" id="AY558420">
    <property type="protein sequence ID" value="AAS56746.1"/>
    <property type="molecule type" value="Genomic_DNA"/>
</dbReference>
<dbReference type="EMBL" id="BK006947">
    <property type="protein sequence ID" value="DAA10453.1"/>
    <property type="molecule type" value="Genomic_DNA"/>
</dbReference>
<dbReference type="PIR" id="S45168">
    <property type="entry name" value="S45168"/>
</dbReference>
<dbReference type="RefSeq" id="NP_014306.3">
    <property type="nucleotide sequence ID" value="NM_001182931.3"/>
</dbReference>
<dbReference type="SMR" id="P36019"/>
<dbReference type="BioGRID" id="35731">
    <property type="interactions" value="66"/>
</dbReference>
<dbReference type="DIP" id="DIP-2025N"/>
<dbReference type="FunCoup" id="P36019">
    <property type="interactions" value="838"/>
</dbReference>
<dbReference type="IntAct" id="P36019">
    <property type="interactions" value="24"/>
</dbReference>
<dbReference type="MINT" id="P36019"/>
<dbReference type="STRING" id="4932.YNL093W"/>
<dbReference type="iPTMnet" id="P36019"/>
<dbReference type="PaxDb" id="4932-YNL093W"/>
<dbReference type="PeptideAtlas" id="P36019"/>
<dbReference type="EnsemblFungi" id="YNL093W_mRNA">
    <property type="protein sequence ID" value="YNL093W"/>
    <property type="gene ID" value="YNL093W"/>
</dbReference>
<dbReference type="GeneID" id="855631"/>
<dbReference type="KEGG" id="sce:YNL093W"/>
<dbReference type="AGR" id="SGD:S000005037"/>
<dbReference type="SGD" id="S000005037">
    <property type="gene designation" value="YPT53"/>
</dbReference>
<dbReference type="VEuPathDB" id="FungiDB:YNL093W"/>
<dbReference type="eggNOG" id="KOG0092">
    <property type="taxonomic scope" value="Eukaryota"/>
</dbReference>
<dbReference type="GeneTree" id="ENSGT00940000161833"/>
<dbReference type="HOGENOM" id="CLU_041217_10_2_1"/>
<dbReference type="InParanoid" id="P36019"/>
<dbReference type="OMA" id="SESHRTC"/>
<dbReference type="OrthoDB" id="63533at2759"/>
<dbReference type="BioCyc" id="YEAST:G3O-33121-MONOMER"/>
<dbReference type="Reactome" id="R-SCE-6798695">
    <property type="pathway name" value="Neutrophil degranulation"/>
</dbReference>
<dbReference type="Reactome" id="R-SCE-8873719">
    <property type="pathway name" value="RAB geranylgeranylation"/>
</dbReference>
<dbReference type="Reactome" id="R-SCE-8876198">
    <property type="pathway name" value="RAB GEFs exchange GTP for GDP on RABs"/>
</dbReference>
<dbReference type="BioGRID-ORCS" id="855631">
    <property type="hits" value="0 hits in 10 CRISPR screens"/>
</dbReference>
<dbReference type="PRO" id="PR:P36019"/>
<dbReference type="Proteomes" id="UP000002311">
    <property type="component" value="Chromosome XIV"/>
</dbReference>
<dbReference type="RNAct" id="P36019">
    <property type="molecule type" value="protein"/>
</dbReference>
<dbReference type="GO" id="GO:0005829">
    <property type="term" value="C:cytosol"/>
    <property type="evidence" value="ECO:0007669"/>
    <property type="project" value="GOC"/>
</dbReference>
<dbReference type="GO" id="GO:0005769">
    <property type="term" value="C:early endosome"/>
    <property type="evidence" value="ECO:0000318"/>
    <property type="project" value="GO_Central"/>
</dbReference>
<dbReference type="GO" id="GO:0030139">
    <property type="term" value="C:endocytic vesicle"/>
    <property type="evidence" value="ECO:0000318"/>
    <property type="project" value="GO_Central"/>
</dbReference>
<dbReference type="GO" id="GO:0012505">
    <property type="term" value="C:endomembrane system"/>
    <property type="evidence" value="ECO:0000318"/>
    <property type="project" value="GO_Central"/>
</dbReference>
<dbReference type="GO" id="GO:0005770">
    <property type="term" value="C:late endosome"/>
    <property type="evidence" value="ECO:0000315"/>
    <property type="project" value="SGD"/>
</dbReference>
<dbReference type="GO" id="GO:0005886">
    <property type="term" value="C:plasma membrane"/>
    <property type="evidence" value="ECO:0000318"/>
    <property type="project" value="GO_Central"/>
</dbReference>
<dbReference type="GO" id="GO:0005525">
    <property type="term" value="F:GTP binding"/>
    <property type="evidence" value="ECO:0007669"/>
    <property type="project" value="UniProtKB-KW"/>
</dbReference>
<dbReference type="GO" id="GO:0003924">
    <property type="term" value="F:GTPase activity"/>
    <property type="evidence" value="ECO:0000314"/>
    <property type="project" value="SGD"/>
</dbReference>
<dbReference type="GO" id="GO:0006897">
    <property type="term" value="P:endocytosis"/>
    <property type="evidence" value="ECO:0000315"/>
    <property type="project" value="SGD"/>
</dbReference>
<dbReference type="GO" id="GO:0006895">
    <property type="term" value="P:Golgi to endosome transport"/>
    <property type="evidence" value="ECO:0000316"/>
    <property type="project" value="SGD"/>
</dbReference>
<dbReference type="GO" id="GO:0006623">
    <property type="term" value="P:protein targeting to vacuole"/>
    <property type="evidence" value="ECO:0000315"/>
    <property type="project" value="SGD"/>
</dbReference>
<dbReference type="CDD" id="cd01860">
    <property type="entry name" value="Rab5_related"/>
    <property type="match status" value="1"/>
</dbReference>
<dbReference type="FunFam" id="3.40.50.300:FF:002514">
    <property type="entry name" value="GTP-binding protein"/>
    <property type="match status" value="1"/>
</dbReference>
<dbReference type="Gene3D" id="3.40.50.300">
    <property type="entry name" value="P-loop containing nucleotide triphosphate hydrolases"/>
    <property type="match status" value="1"/>
</dbReference>
<dbReference type="InterPro" id="IPR027417">
    <property type="entry name" value="P-loop_NTPase"/>
</dbReference>
<dbReference type="InterPro" id="IPR005225">
    <property type="entry name" value="Small_GTP-bd"/>
</dbReference>
<dbReference type="InterPro" id="IPR001806">
    <property type="entry name" value="Small_GTPase"/>
</dbReference>
<dbReference type="NCBIfam" id="TIGR00231">
    <property type="entry name" value="small_GTP"/>
    <property type="match status" value="1"/>
</dbReference>
<dbReference type="PANTHER" id="PTHR47978">
    <property type="match status" value="1"/>
</dbReference>
<dbReference type="Pfam" id="PF00071">
    <property type="entry name" value="Ras"/>
    <property type="match status" value="1"/>
</dbReference>
<dbReference type="PRINTS" id="PR00449">
    <property type="entry name" value="RASTRNSFRMNG"/>
</dbReference>
<dbReference type="SMART" id="SM00175">
    <property type="entry name" value="RAB"/>
    <property type="match status" value="1"/>
</dbReference>
<dbReference type="SMART" id="SM00176">
    <property type="entry name" value="RAN"/>
    <property type="match status" value="1"/>
</dbReference>
<dbReference type="SMART" id="SM00173">
    <property type="entry name" value="RAS"/>
    <property type="match status" value="1"/>
</dbReference>
<dbReference type="SMART" id="SM00174">
    <property type="entry name" value="RHO"/>
    <property type="match status" value="1"/>
</dbReference>
<dbReference type="SUPFAM" id="SSF52540">
    <property type="entry name" value="P-loop containing nucleoside triphosphate hydrolases"/>
    <property type="match status" value="1"/>
</dbReference>
<dbReference type="PROSITE" id="PS51419">
    <property type="entry name" value="RAB"/>
    <property type="match status" value="1"/>
</dbReference>
<comment type="function">
    <text evidence="3">Required for transport in the endocytic pathway and for correct sorting of the vacuolar hydrolases suggesting a possible intersection of the endocytic with the vacuolar sorting pathway. May be involved in recruiting the MON1-CCZ1 complex to membranes enriched in phosphatidylinositol 3-phosphate (PtdIns[3]P) or other charged lipids, leading to recruitment of YPT7 (PubMed:32391792).</text>
</comment>
<comment type="interaction">
    <interactant intactId="EBI-29415">
        <id>P36019</id>
    </interactant>
    <interactant intactId="EBI-28230">
        <id>P53845</id>
        <label>YIF1</label>
    </interactant>
    <organismsDiffer>false</organismsDiffer>
    <experiments>2</experiments>
</comment>
<comment type="subcellular location">
    <subcellularLocation>
        <location evidence="4">Cell membrane</location>
        <topology evidence="4">Lipid-anchor</topology>
        <orientation evidence="4">Cytoplasmic side</orientation>
    </subcellularLocation>
</comment>
<comment type="miscellaneous">
    <text evidence="2">Present with 830 molecules/cell in log phase SD medium.</text>
</comment>
<comment type="similarity">
    <text evidence="4">Belongs to the small GTPase superfamily. Rab family.</text>
</comment>
<protein>
    <recommendedName>
        <fullName>GTP-binding protein YPT53</fullName>
    </recommendedName>
</protein>
<name>YPT53_YEAST</name>
<sequence>MDKHTAAIPTLTIKVVLLGESAVGKSSIVLRFVSDDFKESKEPTIGAAFLTKRITRDGKVIKFEIWDTAGQERFAPLAPMYYRNAQAALVVFDVTNEGSFYKAQNWVEELHEKVGHDIVIALVGNKMDLLNNDDENENRAMKAPAVQNLCERENLLYFEASAKTGENIYQIFQTLGEKVPCPEQNTRQSSTHDRTITDNQRIDLESTTVESTRETGGCNC</sequence>
<gene>
    <name type="primary">YPT53</name>
    <name type="ordered locus">YNL093W</name>
    <name type="ORF">N2223</name>
</gene>